<protein>
    <recommendedName>
        <fullName evidence="1">CinA-like protein</fullName>
    </recommendedName>
</protein>
<feature type="chain" id="PRO_0000156785" description="CinA-like protein">
    <location>
        <begin position="1"/>
        <end position="416"/>
    </location>
</feature>
<evidence type="ECO:0000255" key="1">
    <source>
        <dbReference type="HAMAP-Rule" id="MF_00226"/>
    </source>
</evidence>
<accession>Q55760</accession>
<organism>
    <name type="scientific">Synechocystis sp. (strain ATCC 27184 / PCC 6803 / Kazusa)</name>
    <dbReference type="NCBI Taxonomy" id="1111708"/>
    <lineage>
        <taxon>Bacteria</taxon>
        <taxon>Bacillati</taxon>
        <taxon>Cyanobacteriota</taxon>
        <taxon>Cyanophyceae</taxon>
        <taxon>Synechococcales</taxon>
        <taxon>Merismopediaceae</taxon>
        <taxon>Synechocystis</taxon>
    </lineage>
</organism>
<proteinExistence type="inferred from homology"/>
<dbReference type="EMBL" id="BA000022">
    <property type="protein sequence ID" value="BAA10407.1"/>
    <property type="molecule type" value="Genomic_DNA"/>
</dbReference>
<dbReference type="PIR" id="S76561">
    <property type="entry name" value="S76561"/>
</dbReference>
<dbReference type="SMR" id="Q55760"/>
<dbReference type="FunCoup" id="Q55760">
    <property type="interactions" value="157"/>
</dbReference>
<dbReference type="STRING" id="1148.gene:10499908"/>
<dbReference type="PaxDb" id="1148-1001672"/>
<dbReference type="EnsemblBacteria" id="BAA10407">
    <property type="protein sequence ID" value="BAA10407"/>
    <property type="gene ID" value="BAA10407"/>
</dbReference>
<dbReference type="KEGG" id="syn:slr0427"/>
<dbReference type="eggNOG" id="COG1058">
    <property type="taxonomic scope" value="Bacteria"/>
</dbReference>
<dbReference type="eggNOG" id="COG1546">
    <property type="taxonomic scope" value="Bacteria"/>
</dbReference>
<dbReference type="InParanoid" id="Q55760"/>
<dbReference type="PhylomeDB" id="Q55760"/>
<dbReference type="Proteomes" id="UP000001425">
    <property type="component" value="Chromosome"/>
</dbReference>
<dbReference type="CDD" id="cd00885">
    <property type="entry name" value="cinA"/>
    <property type="match status" value="1"/>
</dbReference>
<dbReference type="Gene3D" id="3.30.70.2860">
    <property type="match status" value="1"/>
</dbReference>
<dbReference type="Gene3D" id="3.90.950.20">
    <property type="entry name" value="CinA-like"/>
    <property type="match status" value="1"/>
</dbReference>
<dbReference type="Gene3D" id="3.40.980.10">
    <property type="entry name" value="MoaB/Mog-like domain"/>
    <property type="match status" value="1"/>
</dbReference>
<dbReference type="HAMAP" id="MF_00226_B">
    <property type="entry name" value="CinA_B"/>
    <property type="match status" value="1"/>
</dbReference>
<dbReference type="InterPro" id="IPR050101">
    <property type="entry name" value="CinA"/>
</dbReference>
<dbReference type="InterPro" id="IPR036653">
    <property type="entry name" value="CinA-like_C"/>
</dbReference>
<dbReference type="InterPro" id="IPR008136">
    <property type="entry name" value="CinA_C"/>
</dbReference>
<dbReference type="InterPro" id="IPR041424">
    <property type="entry name" value="CinA_KH"/>
</dbReference>
<dbReference type="InterPro" id="IPR008135">
    <property type="entry name" value="Competence-induced_CinA"/>
</dbReference>
<dbReference type="InterPro" id="IPR036425">
    <property type="entry name" value="MoaB/Mog-like_dom_sf"/>
</dbReference>
<dbReference type="InterPro" id="IPR001453">
    <property type="entry name" value="MoaB/Mog_dom"/>
</dbReference>
<dbReference type="NCBIfam" id="TIGR00200">
    <property type="entry name" value="cinA_nterm"/>
    <property type="match status" value="1"/>
</dbReference>
<dbReference type="NCBIfam" id="TIGR00199">
    <property type="entry name" value="PncC_domain"/>
    <property type="match status" value="1"/>
</dbReference>
<dbReference type="NCBIfam" id="NF001813">
    <property type="entry name" value="PRK00549.1"/>
    <property type="match status" value="1"/>
</dbReference>
<dbReference type="PANTHER" id="PTHR13939">
    <property type="entry name" value="NICOTINAMIDE-NUCLEOTIDE AMIDOHYDROLASE PNCC"/>
    <property type="match status" value="1"/>
</dbReference>
<dbReference type="PANTHER" id="PTHR13939:SF0">
    <property type="entry name" value="NMN AMIDOHYDROLASE-LIKE PROTEIN YFAY"/>
    <property type="match status" value="1"/>
</dbReference>
<dbReference type="Pfam" id="PF02464">
    <property type="entry name" value="CinA"/>
    <property type="match status" value="1"/>
</dbReference>
<dbReference type="Pfam" id="PF18146">
    <property type="entry name" value="CinA_KH"/>
    <property type="match status" value="1"/>
</dbReference>
<dbReference type="Pfam" id="PF00994">
    <property type="entry name" value="MoCF_biosynth"/>
    <property type="match status" value="1"/>
</dbReference>
<dbReference type="PIRSF" id="PIRSF006728">
    <property type="entry name" value="CinA"/>
    <property type="match status" value="1"/>
</dbReference>
<dbReference type="SMART" id="SM00852">
    <property type="entry name" value="MoCF_biosynth"/>
    <property type="match status" value="1"/>
</dbReference>
<dbReference type="SUPFAM" id="SSF142433">
    <property type="entry name" value="CinA-like"/>
    <property type="match status" value="1"/>
</dbReference>
<dbReference type="SUPFAM" id="SSF53218">
    <property type="entry name" value="Molybdenum cofactor biosynthesis proteins"/>
    <property type="match status" value="1"/>
</dbReference>
<name>CINAL_SYNY3</name>
<reference key="1">
    <citation type="journal article" date="1995" name="DNA Res.">
        <title>Sequence analysis of the genome of the unicellular cyanobacterium Synechocystis sp. strain PCC6803. I. Sequence features in the 1 Mb region from map positions 64% to 92% of the genome.</title>
        <authorList>
            <person name="Kaneko T."/>
            <person name="Tanaka A."/>
            <person name="Sato S."/>
            <person name="Kotani H."/>
            <person name="Sazuka T."/>
            <person name="Miyajima N."/>
            <person name="Sugiura M."/>
            <person name="Tabata S."/>
        </authorList>
    </citation>
    <scope>NUCLEOTIDE SEQUENCE [LARGE SCALE GENOMIC DNA]</scope>
    <source>
        <strain>ATCC 27184 / PCC 6803 / N-1</strain>
    </source>
</reference>
<reference key="2">
    <citation type="journal article" date="1996" name="DNA Res.">
        <title>Sequence analysis of the genome of the unicellular cyanobacterium Synechocystis sp. strain PCC6803. II. Sequence determination of the entire genome and assignment of potential protein-coding regions.</title>
        <authorList>
            <person name="Kaneko T."/>
            <person name="Sato S."/>
            <person name="Kotani H."/>
            <person name="Tanaka A."/>
            <person name="Asamizu E."/>
            <person name="Nakamura Y."/>
            <person name="Miyajima N."/>
            <person name="Hirosawa M."/>
            <person name="Sugiura M."/>
            <person name="Sasamoto S."/>
            <person name="Kimura T."/>
            <person name="Hosouchi T."/>
            <person name="Matsuno A."/>
            <person name="Muraki A."/>
            <person name="Nakazaki N."/>
            <person name="Naruo K."/>
            <person name="Okumura S."/>
            <person name="Shimpo S."/>
            <person name="Takeuchi C."/>
            <person name="Wada T."/>
            <person name="Watanabe A."/>
            <person name="Yamada M."/>
            <person name="Yasuda M."/>
            <person name="Tabata S."/>
        </authorList>
    </citation>
    <scope>NUCLEOTIDE SEQUENCE [LARGE SCALE GENOMIC DNA]</scope>
    <source>
        <strain>ATCC 27184 / PCC 6803 / Kazusa</strain>
    </source>
</reference>
<gene>
    <name type="ordered locus">slr0427</name>
</gene>
<keyword id="KW-1185">Reference proteome</keyword>
<sequence length="416" mass="44707">MAAEIICVGTELLLGEILNSNSQYLAQELARLGIPHYFQTVVGDNPERIKRAIAIARERAQILIFTGGLGPTPDDLTTETIADFFRTPLQENIAVIADIEAKFAQTGRPMAANNRKQALLPLGAELLANATGTAPGMIWHPQPDLLILTFPGVPSEMRQMWQGVAVPYLQSQGWGKTTIYSRVLRFQGIGESALAEKVTDFFTLTNPTVAPYAGKGEVRLRISCPASSEALAKEIIDPIAEEIKAIAGLDYFGQDEDTIASVVGALLRERGETVAVAESCTGGGLGALLTDQPGSSDYFWGGVIAYYNQVKIKLLGVDPEIIEYCGAVSEATAEAMALGVKERLGTDWGIAITGIAGPGGGTEEKPIGTVYVGLADPHGQASHILLQFGDRRGREWIRYLSACQALDHLRRRLQSS</sequence>
<comment type="similarity">
    <text evidence="1">Belongs to the CinA family.</text>
</comment>